<dbReference type="EMBL" id="M63623">
    <property type="protein sequence ID" value="AAA59970.1"/>
    <property type="status" value="ALT_SEQ"/>
    <property type="molecule type" value="mRNA"/>
</dbReference>
<dbReference type="EMBL" id="X57436">
    <property type="protein sequence ID" value="CAA40684.1"/>
    <property type="molecule type" value="Genomic_DNA"/>
</dbReference>
<dbReference type="EMBL" id="X51694">
    <property type="protein sequence ID" value="CAA35991.1"/>
    <property type="status" value="ALT_SEQ"/>
    <property type="molecule type" value="mRNA"/>
</dbReference>
<dbReference type="EMBL" id="CH471147">
    <property type="protein sequence ID" value="EAW80279.1"/>
    <property type="molecule type" value="Genomic_DNA"/>
</dbReference>
<dbReference type="EMBL" id="CH471147">
    <property type="protein sequence ID" value="EAW80280.1"/>
    <property type="molecule type" value="Genomic_DNA"/>
</dbReference>
<dbReference type="EMBL" id="BC018050">
    <property type="protein sequence ID" value="AAH18050.1"/>
    <property type="molecule type" value="mRNA"/>
</dbReference>
<dbReference type="CCDS" id="CCDS11265.1"/>
<dbReference type="PIR" id="A36688">
    <property type="entry name" value="A39613"/>
</dbReference>
<dbReference type="RefSeq" id="NP_002535.3">
    <property type="nucleotide sequence ID" value="NM_002544.4"/>
</dbReference>
<dbReference type="SMR" id="P23515"/>
<dbReference type="BioGRID" id="111022">
    <property type="interactions" value="9"/>
</dbReference>
<dbReference type="FunCoup" id="P23515">
    <property type="interactions" value="695"/>
</dbReference>
<dbReference type="IntAct" id="P23515">
    <property type="interactions" value="3"/>
</dbReference>
<dbReference type="MINT" id="P23515"/>
<dbReference type="STRING" id="9606.ENSP00000247271"/>
<dbReference type="GlyCosmos" id="P23515">
    <property type="glycosylation" value="12 sites, 1 glycan"/>
</dbReference>
<dbReference type="GlyGen" id="P23515">
    <property type="glycosylation" value="13 sites, 2 N-linked glycans (2 sites), 1 O-linked glycan (1 site)"/>
</dbReference>
<dbReference type="iPTMnet" id="P23515"/>
<dbReference type="PhosphoSitePlus" id="P23515"/>
<dbReference type="BioMuta" id="OMG"/>
<dbReference type="DMDM" id="129122"/>
<dbReference type="MassIVE" id="P23515"/>
<dbReference type="PaxDb" id="9606-ENSP00000247271"/>
<dbReference type="PeptideAtlas" id="P23515"/>
<dbReference type="ProteomicsDB" id="54125"/>
<dbReference type="TopDownProteomics" id="P23515"/>
<dbReference type="Antibodypedia" id="2187">
    <property type="antibodies" value="278 antibodies from 39 providers"/>
</dbReference>
<dbReference type="DNASU" id="4974"/>
<dbReference type="Ensembl" id="ENST00000247271.5">
    <property type="protein sequence ID" value="ENSP00000247271.4"/>
    <property type="gene ID" value="ENSG00000126861.5"/>
</dbReference>
<dbReference type="Ensembl" id="ENST00000708440.1">
    <property type="protein sequence ID" value="ENSP00000517225.1"/>
    <property type="gene ID" value="ENSG00000291720.1"/>
</dbReference>
<dbReference type="GeneID" id="4974"/>
<dbReference type="KEGG" id="hsa:4974"/>
<dbReference type="MANE-Select" id="ENST00000247271.5">
    <property type="protein sequence ID" value="ENSP00000247271.4"/>
    <property type="RefSeq nucleotide sequence ID" value="NM_002544.5"/>
    <property type="RefSeq protein sequence ID" value="NP_002535.3"/>
</dbReference>
<dbReference type="UCSC" id="uc002hgj.4">
    <property type="organism name" value="human"/>
</dbReference>
<dbReference type="AGR" id="HGNC:8135"/>
<dbReference type="CTD" id="4974"/>
<dbReference type="DisGeNET" id="4974"/>
<dbReference type="GeneCards" id="OMG"/>
<dbReference type="HGNC" id="HGNC:8135">
    <property type="gene designation" value="OMG"/>
</dbReference>
<dbReference type="HPA" id="ENSG00000126861">
    <property type="expression patterns" value="Tissue enriched (brain)"/>
</dbReference>
<dbReference type="MalaCards" id="OMG"/>
<dbReference type="MIM" id="164345">
    <property type="type" value="gene"/>
</dbReference>
<dbReference type="neXtProt" id="NX_P23515"/>
<dbReference type="OpenTargets" id="ENSG00000126861"/>
<dbReference type="PharmGKB" id="PA31922"/>
<dbReference type="VEuPathDB" id="HostDB:ENSG00000126861"/>
<dbReference type="eggNOG" id="KOG0619">
    <property type="taxonomic scope" value="Eukaryota"/>
</dbReference>
<dbReference type="GeneTree" id="ENSGT00940000160802"/>
<dbReference type="HOGENOM" id="CLU_050697_0_0_1"/>
<dbReference type="InParanoid" id="P23515"/>
<dbReference type="OMA" id="PDKAFDQ"/>
<dbReference type="OrthoDB" id="1574204at2759"/>
<dbReference type="PAN-GO" id="P23515">
    <property type="GO annotations" value="1 GO annotation based on evolutionary models"/>
</dbReference>
<dbReference type="PhylomeDB" id="P23515"/>
<dbReference type="TreeFam" id="TF335688"/>
<dbReference type="PathwayCommons" id="P23515"/>
<dbReference type="Reactome" id="R-HSA-193634">
    <property type="pathway name" value="Axonal growth inhibition (RHOA activation)"/>
</dbReference>
<dbReference type="SignaLink" id="P23515"/>
<dbReference type="SIGNOR" id="P23515"/>
<dbReference type="BioGRID-ORCS" id="4974">
    <property type="hits" value="14 hits in 1138 CRISPR screens"/>
</dbReference>
<dbReference type="CD-CODE" id="FB4E32DD">
    <property type="entry name" value="Presynaptic clusters and postsynaptic densities"/>
</dbReference>
<dbReference type="GeneWiki" id="OMG_(gene)"/>
<dbReference type="GenomeRNAi" id="4974"/>
<dbReference type="Pharos" id="P23515">
    <property type="development level" value="Tbio"/>
</dbReference>
<dbReference type="PRO" id="PR:P23515"/>
<dbReference type="Proteomes" id="UP000005640">
    <property type="component" value="Chromosome 17"/>
</dbReference>
<dbReference type="RNAct" id="P23515">
    <property type="molecule type" value="protein"/>
</dbReference>
<dbReference type="Bgee" id="ENSG00000126861">
    <property type="expression patterns" value="Expressed in olfactory segment of nasal mucosa and 153 other cell types or tissues"/>
</dbReference>
<dbReference type="GO" id="GO:0005886">
    <property type="term" value="C:plasma membrane"/>
    <property type="evidence" value="ECO:0000304"/>
    <property type="project" value="Reactome"/>
</dbReference>
<dbReference type="GO" id="GO:0098552">
    <property type="term" value="C:side of membrane"/>
    <property type="evidence" value="ECO:0007669"/>
    <property type="project" value="UniProtKB-KW"/>
</dbReference>
<dbReference type="GO" id="GO:0007155">
    <property type="term" value="P:cell adhesion"/>
    <property type="evidence" value="ECO:0007669"/>
    <property type="project" value="UniProtKB-KW"/>
</dbReference>
<dbReference type="GO" id="GO:0031102">
    <property type="term" value="P:neuron projection regeneration"/>
    <property type="evidence" value="ECO:0000318"/>
    <property type="project" value="GO_Central"/>
</dbReference>
<dbReference type="FunFam" id="3.80.10.10:FF:000180">
    <property type="entry name" value="Oligodendrocyte myelin glycoprotein"/>
    <property type="match status" value="1"/>
</dbReference>
<dbReference type="FunFam" id="3.80.10.10:FF:000445">
    <property type="entry name" value="Oligodendrocyte myelin glycoprotein b"/>
    <property type="match status" value="1"/>
</dbReference>
<dbReference type="Gene3D" id="3.80.10.10">
    <property type="entry name" value="Ribonuclease Inhibitor"/>
    <property type="match status" value="3"/>
</dbReference>
<dbReference type="InterPro" id="IPR001611">
    <property type="entry name" value="Leu-rich_rpt"/>
</dbReference>
<dbReference type="InterPro" id="IPR003591">
    <property type="entry name" value="Leu-rich_rpt_typical-subtyp"/>
</dbReference>
<dbReference type="InterPro" id="IPR051071">
    <property type="entry name" value="LRR-bact_E3_ubiq_ligases"/>
</dbReference>
<dbReference type="InterPro" id="IPR032675">
    <property type="entry name" value="LRR_dom_sf"/>
</dbReference>
<dbReference type="InterPro" id="IPR000372">
    <property type="entry name" value="LRRNT"/>
</dbReference>
<dbReference type="PANTHER" id="PTHR47114">
    <property type="match status" value="1"/>
</dbReference>
<dbReference type="PANTHER" id="PTHR47114:SF2">
    <property type="entry name" value="OLIGODENDROCYTE-MYELIN GLYCOPROTEIN"/>
    <property type="match status" value="1"/>
</dbReference>
<dbReference type="Pfam" id="PF00560">
    <property type="entry name" value="LRR_1"/>
    <property type="match status" value="2"/>
</dbReference>
<dbReference type="Pfam" id="PF13855">
    <property type="entry name" value="LRR_8"/>
    <property type="match status" value="1"/>
</dbReference>
<dbReference type="Pfam" id="PF01462">
    <property type="entry name" value="LRRNT"/>
    <property type="match status" value="1"/>
</dbReference>
<dbReference type="PRINTS" id="PR00019">
    <property type="entry name" value="LEURICHRPT"/>
</dbReference>
<dbReference type="SMART" id="SM00369">
    <property type="entry name" value="LRR_TYP"/>
    <property type="match status" value="5"/>
</dbReference>
<dbReference type="SMART" id="SM00013">
    <property type="entry name" value="LRRNT"/>
    <property type="match status" value="1"/>
</dbReference>
<dbReference type="SUPFAM" id="SSF52058">
    <property type="entry name" value="L domain-like"/>
    <property type="match status" value="1"/>
</dbReference>
<dbReference type="PROSITE" id="PS51450">
    <property type="entry name" value="LRR"/>
    <property type="match status" value="6"/>
</dbReference>
<name>OMGP_HUMAN</name>
<keyword id="KW-0130">Cell adhesion</keyword>
<keyword id="KW-1003">Cell membrane</keyword>
<keyword id="KW-0903">Direct protein sequencing</keyword>
<keyword id="KW-0325">Glycoprotein</keyword>
<keyword id="KW-0336">GPI-anchor</keyword>
<keyword id="KW-0433">Leucine-rich repeat</keyword>
<keyword id="KW-0449">Lipoprotein</keyword>
<keyword id="KW-0472">Membrane</keyword>
<keyword id="KW-1267">Proteomics identification</keyword>
<keyword id="KW-1185">Reference proteome</keyword>
<keyword id="KW-0677">Repeat</keyword>
<keyword id="KW-0732">Signal</keyword>
<protein>
    <recommendedName>
        <fullName>Oligodendrocyte-myelin glycoprotein</fullName>
    </recommendedName>
</protein>
<evidence type="ECO:0000255" key="1"/>
<evidence type="ECO:0000269" key="2">
    <source>
    </source>
</evidence>
<evidence type="ECO:0000269" key="3">
    <source>
    </source>
</evidence>
<evidence type="ECO:0000305" key="4"/>
<feature type="signal peptide" evidence="3">
    <location>
        <begin position="1"/>
        <end position="24"/>
    </location>
</feature>
<feature type="chain" id="PRO_0000021888" description="Oligodendrocyte-myelin glycoprotein">
    <location>
        <begin position="25"/>
        <end position="417"/>
    </location>
</feature>
<feature type="propeptide" id="PRO_0000021889" description="Removed in mature form" evidence="1">
    <location>
        <begin position="418"/>
        <end position="440"/>
    </location>
</feature>
<feature type="domain" description="LRRNT">
    <location>
        <begin position="25"/>
        <end position="55"/>
    </location>
</feature>
<feature type="repeat" description="LRR 1">
    <location>
        <begin position="56"/>
        <end position="77"/>
    </location>
</feature>
<feature type="repeat" description="LRR 2">
    <location>
        <begin position="79"/>
        <end position="100"/>
    </location>
</feature>
<feature type="repeat" description="LRR 3">
    <location>
        <begin position="101"/>
        <end position="121"/>
    </location>
</feature>
<feature type="repeat" description="LRR 4">
    <location>
        <begin position="124"/>
        <end position="145"/>
    </location>
</feature>
<feature type="repeat" description="LRR 5">
    <location>
        <begin position="147"/>
        <end position="168"/>
    </location>
</feature>
<feature type="repeat" description="LRR 6">
    <location>
        <begin position="169"/>
        <end position="189"/>
    </location>
</feature>
<feature type="repeat" description="LRR 7">
    <location>
        <begin position="192"/>
        <end position="213"/>
    </location>
</feature>
<feature type="repeat" description="LRR 8">
    <location>
        <begin position="216"/>
        <end position="239"/>
    </location>
</feature>
<feature type="repeat" description="Ser/Thr-rich">
    <location>
        <begin position="229"/>
        <end position="270"/>
    </location>
</feature>
<feature type="repeat" description="Ser/Thr-rich">
    <location>
        <begin position="271"/>
        <end position="292"/>
    </location>
</feature>
<feature type="repeat" description="Ser/Thr-rich">
    <location>
        <begin position="293"/>
        <end position="335"/>
    </location>
</feature>
<feature type="repeat" description="Ser/Thr-rich">
    <location>
        <begin position="336"/>
        <end position="377"/>
    </location>
</feature>
<feature type="repeat" description="Ser/Thr-rich">
    <location>
        <begin position="378"/>
        <end position="416"/>
    </location>
</feature>
<feature type="lipid moiety-binding region" description="GPI-anchor amidated serine" evidence="1">
    <location>
        <position position="417"/>
    </location>
</feature>
<feature type="glycosylation site" description="N-linked (GlcNAc...) asparagine" evidence="1">
    <location>
        <position position="45"/>
    </location>
</feature>
<feature type="glycosylation site" description="N-linked (GlcNAc...) asparagine" evidence="1">
    <location>
        <position position="61"/>
    </location>
</feature>
<feature type="glycosylation site" description="N-linked (GlcNAc...) asparagine" evidence="1">
    <location>
        <position position="103"/>
    </location>
</feature>
<feature type="glycosylation site" description="N-linked (GlcNAc...) asparagine" evidence="1">
    <location>
        <position position="152"/>
    </location>
</feature>
<feature type="glycosylation site" description="N-linked (GlcNAc...) asparagine" evidence="1">
    <location>
        <position position="176"/>
    </location>
</feature>
<feature type="glycosylation site" description="N-linked (GlcNAc...) asparagine" evidence="1">
    <location>
        <position position="189"/>
    </location>
</feature>
<feature type="glycosylation site" description="N-linked (GlcNAc...) asparagine" evidence="1">
    <location>
        <position position="192"/>
    </location>
</feature>
<feature type="glycosylation site" description="N-linked (GlcNAc...) asparagine" evidence="1">
    <location>
        <position position="234"/>
    </location>
</feature>
<feature type="glycosylation site" description="N-linked (GlcNAc...) asparagine" evidence="1">
    <location>
        <position position="364"/>
    </location>
</feature>
<feature type="glycosylation site" description="N-linked (GlcNAc...) asparagine" evidence="1">
    <location>
        <position position="389"/>
    </location>
</feature>
<feature type="glycosylation site" description="N-linked (GlcNAc...) asparagine" evidence="1">
    <location>
        <position position="425"/>
    </location>
</feature>
<feature type="sequence variant" id="VAR_051252" description="In dbSNP:rs11080149.">
    <original>G</original>
    <variation>D</variation>
    <location>
        <position position="21"/>
    </location>
</feature>
<feature type="sequence variant" id="VAR_051253" description="In dbSNP:rs16972169.">
    <original>V</original>
    <variation>A</variation>
    <location>
        <position position="435"/>
    </location>
</feature>
<organism>
    <name type="scientific">Homo sapiens</name>
    <name type="common">Human</name>
    <dbReference type="NCBI Taxonomy" id="9606"/>
    <lineage>
        <taxon>Eukaryota</taxon>
        <taxon>Metazoa</taxon>
        <taxon>Chordata</taxon>
        <taxon>Craniata</taxon>
        <taxon>Vertebrata</taxon>
        <taxon>Euteleostomi</taxon>
        <taxon>Mammalia</taxon>
        <taxon>Eutheria</taxon>
        <taxon>Euarchontoglires</taxon>
        <taxon>Primates</taxon>
        <taxon>Haplorrhini</taxon>
        <taxon>Catarrhini</taxon>
        <taxon>Hominidae</taxon>
        <taxon>Homo</taxon>
    </lineage>
</organism>
<comment type="function">
    <text>Cell adhesion molecule contributing to the interactive process required for myelination in the central nervous system.</text>
</comment>
<comment type="subunit">
    <text evidence="2">Binds to RTN4R.</text>
</comment>
<comment type="subcellular location">
    <subcellularLocation>
        <location>Cell membrane</location>
        <topology>Lipid-anchor</topology>
        <topology>GPI-anchor</topology>
    </subcellularLocation>
</comment>
<comment type="tissue specificity">
    <text>Oligodendrocytes and myelin of the central nervous system.</text>
</comment>
<comment type="PTM">
    <text evidence="4">O-glycosylated in its Ser/Thr-rich repeat domain.</text>
</comment>
<comment type="caution">
    <text evidence="4">Do not confuse oligodendrocyte-myelin glycoprotein (OMG) with myelin-oligodendrocyte glycoprotein (MOG).</text>
</comment>
<reference key="1">
    <citation type="journal article" date="1991" name="Mol. Cell. Biol.">
        <title>The gene encoding the oligodendrocyte-myelin glycoprotein is embedded within the neurofibromatosis type 1 gene.</title>
        <authorList>
            <person name="Viskochil D."/>
            <person name="Cawthon R.M."/>
            <person name="O'Connell P."/>
            <person name="Xu G."/>
            <person name="Stevens J."/>
            <person name="Culver M."/>
            <person name="Carey J."/>
            <person name="White R."/>
        </authorList>
    </citation>
    <scope>NUCLEOTIDE SEQUENCE [MRNA]</scope>
</reference>
<reference key="2">
    <citation type="journal article" date="1990" name="J. Cell Biol.">
        <title>The oligodendrocyte-myelin glycoprotein belongs to a distinct family of proteins and contains the HNK-1 carbohydrate.</title>
        <authorList>
            <person name="Mikol D.D."/>
            <person name="Gulcher J."/>
            <person name="Stefansson K."/>
        </authorList>
    </citation>
    <scope>NUCLEOTIDE SEQUENCE [MRNA]</scope>
</reference>
<reference key="3">
    <citation type="journal article" date="1990" name="J. Cell Biol.">
        <title>Structure and chromosomal localization of the gene for the oligodendrocyte-myelin glycoprotein.</title>
        <authorList>
            <person name="Mikol D.D."/>
            <person name="Alexakos M.J."/>
            <person name="Bayley C.A."/>
            <person name="Lemons R.S."/>
            <person name="le Beau M.M."/>
            <person name="Stefansson K."/>
        </authorList>
    </citation>
    <scope>NUCLEOTIDE SEQUENCE [GENOMIC DNA]</scope>
</reference>
<reference key="4">
    <citation type="submission" date="2005-09" db="EMBL/GenBank/DDBJ databases">
        <authorList>
            <person name="Mural R.J."/>
            <person name="Istrail S."/>
            <person name="Sutton G.G."/>
            <person name="Florea L."/>
            <person name="Halpern A.L."/>
            <person name="Mobarry C.M."/>
            <person name="Lippert R."/>
            <person name="Walenz B."/>
            <person name="Shatkay H."/>
            <person name="Dew I."/>
            <person name="Miller J.R."/>
            <person name="Flanigan M.J."/>
            <person name="Edwards N.J."/>
            <person name="Bolanos R."/>
            <person name="Fasulo D."/>
            <person name="Halldorsson B.V."/>
            <person name="Hannenhalli S."/>
            <person name="Turner R."/>
            <person name="Yooseph S."/>
            <person name="Lu F."/>
            <person name="Nusskern D.R."/>
            <person name="Shue B.C."/>
            <person name="Zheng X.H."/>
            <person name="Zhong F."/>
            <person name="Delcher A.L."/>
            <person name="Huson D.H."/>
            <person name="Kravitz S.A."/>
            <person name="Mouchard L."/>
            <person name="Reinert K."/>
            <person name="Remington K.A."/>
            <person name="Clark A.G."/>
            <person name="Waterman M.S."/>
            <person name="Eichler E.E."/>
            <person name="Adams M.D."/>
            <person name="Hunkapiller M.W."/>
            <person name="Myers E.W."/>
            <person name="Venter J.C."/>
        </authorList>
    </citation>
    <scope>NUCLEOTIDE SEQUENCE [LARGE SCALE GENOMIC DNA]</scope>
</reference>
<reference key="5">
    <citation type="journal article" date="2004" name="Genome Res.">
        <title>The status, quality, and expansion of the NIH full-length cDNA project: the Mammalian Gene Collection (MGC).</title>
        <authorList>
            <consortium name="The MGC Project Team"/>
        </authorList>
    </citation>
    <scope>NUCLEOTIDE SEQUENCE [LARGE SCALE MRNA]</scope>
    <source>
        <tissue>Brain</tissue>
    </source>
</reference>
<reference key="6">
    <citation type="journal article" date="1988" name="J. Cell Biol.">
        <title>A phosphatidylinositol-linked peanut agglutinin-binding glycoprotein in central nervous system myelin and on oligodendrocytes.</title>
        <authorList>
            <person name="Mikol D.D."/>
            <person name="Stefansson K."/>
        </authorList>
    </citation>
    <scope>PROTEIN SEQUENCE OF 25-52</scope>
</reference>
<reference key="7">
    <citation type="journal article" date="2008" name="J. Neurosci.">
        <title>Genetic variants of Nogo-66 receptor with possible association to schizophrenia block myelin inhibition of axon growth.</title>
        <authorList>
            <person name="Budel S."/>
            <person name="Padukkavidana T."/>
            <person name="Liu B.P."/>
            <person name="Feng Z."/>
            <person name="Hu F."/>
            <person name="Johnson S."/>
            <person name="Lauren J."/>
            <person name="Park J.H."/>
            <person name="McGee A.W."/>
            <person name="Liao J."/>
            <person name="Stillman A."/>
            <person name="Kim J.E."/>
            <person name="Yang B.Z."/>
            <person name="Sodi S."/>
            <person name="Gelernter J."/>
            <person name="Zhao H."/>
            <person name="Hisama F."/>
            <person name="Arnsten A.F."/>
            <person name="Strittmatter S.M."/>
        </authorList>
    </citation>
    <scope>INTERACTION WITH RTN4R</scope>
</reference>
<proteinExistence type="evidence at protein level"/>
<sequence length="440" mass="49608">MEYQILKMSLCLFILLFLTPGILCICPLQCICTERHRHVDCSGRNLSTLPSGLQENIIHLNLSYNHFTDLHNQLTQYTNLRTLDISNNRLESLPAHLPRSLWNMSAANNNIKLLDKSDTAYQWNLKYLDVSKNMLEKVVLIKNTLRSLEVLNLSSNKLWTVPTNMPSKLHIVDLSNNSLTQILPGTLINLTNLTHLYLHNNKFTFIPDQSFDQLFQLQEITLYNNRWSCDHKQNITYLLKWMMETKAHVIGTPCSTQISSLKEHNMYPTPSGFTSSLFTVSGMQTVDTINSLSVVTQPKVTKIPKQYRTKETTFGATLSKDTTFTSTDKAFVPYPEDTSTETINSHEAAAATLTIHLQDGMVTNTSLTSSTKSSPTPMTLSITSGMPNNFSEMPQQSTTLNLWREETTTNVKTPLPSVANAWKVNASFLLLLNVVVMLAV</sequence>
<accession>P23515</accession>
<accession>E1P659</accession>
<gene>
    <name type="primary">OMG</name>
    <name type="synonym">OMGP</name>
</gene>